<protein>
    <recommendedName>
        <fullName evidence="1">ATP-dependent Clp protease proteolytic subunit</fullName>
        <ecNumber evidence="1">3.4.21.92</ecNumber>
    </recommendedName>
    <alternativeName>
        <fullName evidence="1">Endopeptidase Clp</fullName>
    </alternativeName>
</protein>
<dbReference type="EC" id="3.4.21.92" evidence="1"/>
<dbReference type="EMBL" id="CP000050">
    <property type="protein sequence ID" value="AAY50309.1"/>
    <property type="molecule type" value="Genomic_DNA"/>
</dbReference>
<dbReference type="RefSeq" id="WP_011036184.1">
    <property type="nucleotide sequence ID" value="NZ_CP155948.1"/>
</dbReference>
<dbReference type="SMR" id="Q4URL4"/>
<dbReference type="MEROPS" id="S14.001"/>
<dbReference type="KEGG" id="xcb:XC_3265"/>
<dbReference type="HOGENOM" id="CLU_058707_3_2_6"/>
<dbReference type="Proteomes" id="UP000000420">
    <property type="component" value="Chromosome"/>
</dbReference>
<dbReference type="GO" id="GO:0005737">
    <property type="term" value="C:cytoplasm"/>
    <property type="evidence" value="ECO:0007669"/>
    <property type="project" value="UniProtKB-SubCell"/>
</dbReference>
<dbReference type="GO" id="GO:0009368">
    <property type="term" value="C:endopeptidase Clp complex"/>
    <property type="evidence" value="ECO:0007669"/>
    <property type="project" value="TreeGrafter"/>
</dbReference>
<dbReference type="GO" id="GO:0004176">
    <property type="term" value="F:ATP-dependent peptidase activity"/>
    <property type="evidence" value="ECO:0007669"/>
    <property type="project" value="InterPro"/>
</dbReference>
<dbReference type="GO" id="GO:0051117">
    <property type="term" value="F:ATPase binding"/>
    <property type="evidence" value="ECO:0007669"/>
    <property type="project" value="TreeGrafter"/>
</dbReference>
<dbReference type="GO" id="GO:0004252">
    <property type="term" value="F:serine-type endopeptidase activity"/>
    <property type="evidence" value="ECO:0007669"/>
    <property type="project" value="UniProtKB-UniRule"/>
</dbReference>
<dbReference type="GO" id="GO:0006515">
    <property type="term" value="P:protein quality control for misfolded or incompletely synthesized proteins"/>
    <property type="evidence" value="ECO:0007669"/>
    <property type="project" value="TreeGrafter"/>
</dbReference>
<dbReference type="CDD" id="cd07017">
    <property type="entry name" value="S14_ClpP_2"/>
    <property type="match status" value="1"/>
</dbReference>
<dbReference type="FunFam" id="3.90.226.10:FF:000001">
    <property type="entry name" value="ATP-dependent Clp protease proteolytic subunit"/>
    <property type="match status" value="1"/>
</dbReference>
<dbReference type="Gene3D" id="3.90.226.10">
    <property type="entry name" value="2-enoyl-CoA Hydratase, Chain A, domain 1"/>
    <property type="match status" value="1"/>
</dbReference>
<dbReference type="HAMAP" id="MF_00444">
    <property type="entry name" value="ClpP"/>
    <property type="match status" value="1"/>
</dbReference>
<dbReference type="InterPro" id="IPR001907">
    <property type="entry name" value="ClpP"/>
</dbReference>
<dbReference type="InterPro" id="IPR029045">
    <property type="entry name" value="ClpP/crotonase-like_dom_sf"/>
</dbReference>
<dbReference type="InterPro" id="IPR023562">
    <property type="entry name" value="ClpP/TepA"/>
</dbReference>
<dbReference type="InterPro" id="IPR033135">
    <property type="entry name" value="ClpP_His_AS"/>
</dbReference>
<dbReference type="InterPro" id="IPR018215">
    <property type="entry name" value="ClpP_Ser_AS"/>
</dbReference>
<dbReference type="NCBIfam" id="TIGR00493">
    <property type="entry name" value="clpP"/>
    <property type="match status" value="1"/>
</dbReference>
<dbReference type="NCBIfam" id="NF001368">
    <property type="entry name" value="PRK00277.1"/>
    <property type="match status" value="1"/>
</dbReference>
<dbReference type="NCBIfam" id="NF009205">
    <property type="entry name" value="PRK12553.1"/>
    <property type="match status" value="1"/>
</dbReference>
<dbReference type="PANTHER" id="PTHR10381">
    <property type="entry name" value="ATP-DEPENDENT CLP PROTEASE PROTEOLYTIC SUBUNIT"/>
    <property type="match status" value="1"/>
</dbReference>
<dbReference type="PANTHER" id="PTHR10381:SF70">
    <property type="entry name" value="ATP-DEPENDENT CLP PROTEASE PROTEOLYTIC SUBUNIT"/>
    <property type="match status" value="1"/>
</dbReference>
<dbReference type="Pfam" id="PF00574">
    <property type="entry name" value="CLP_protease"/>
    <property type="match status" value="1"/>
</dbReference>
<dbReference type="PRINTS" id="PR00127">
    <property type="entry name" value="CLPPROTEASEP"/>
</dbReference>
<dbReference type="SUPFAM" id="SSF52096">
    <property type="entry name" value="ClpP/crotonase"/>
    <property type="match status" value="1"/>
</dbReference>
<dbReference type="PROSITE" id="PS00382">
    <property type="entry name" value="CLP_PROTEASE_HIS"/>
    <property type="match status" value="1"/>
</dbReference>
<dbReference type="PROSITE" id="PS00381">
    <property type="entry name" value="CLP_PROTEASE_SER"/>
    <property type="match status" value="1"/>
</dbReference>
<sequence length="208" mass="22805">MSIVTKALNLVPMVVEQTSRGERAYDIYSRLLKERLIFLVGPIDDHMANVIVAQLLFLEADNPEKDISIYINSPGGVVTAGMAIYDTMQYIKPDVSTICVGQAASMGALLLASGAAGKRYALPNSRVMIHQPLGGFQGQATDIDIHAREILTLRSRLNEILAKHTGQSLETIARDTERDNFKSAVDAQAYGLVDHVLERRPEESIQPS</sequence>
<gene>
    <name evidence="1" type="primary">clpP</name>
    <name type="ordered locus">XC_3265</name>
</gene>
<organism>
    <name type="scientific">Xanthomonas campestris pv. campestris (strain 8004)</name>
    <dbReference type="NCBI Taxonomy" id="314565"/>
    <lineage>
        <taxon>Bacteria</taxon>
        <taxon>Pseudomonadati</taxon>
        <taxon>Pseudomonadota</taxon>
        <taxon>Gammaproteobacteria</taxon>
        <taxon>Lysobacterales</taxon>
        <taxon>Lysobacteraceae</taxon>
        <taxon>Xanthomonas</taxon>
    </lineage>
</organism>
<keyword id="KW-0963">Cytoplasm</keyword>
<keyword id="KW-0378">Hydrolase</keyword>
<keyword id="KW-0645">Protease</keyword>
<keyword id="KW-0720">Serine protease</keyword>
<name>CLPP_XANC8</name>
<feature type="chain" id="PRO_0000226478" description="ATP-dependent Clp protease proteolytic subunit">
    <location>
        <begin position="1"/>
        <end position="208"/>
    </location>
</feature>
<feature type="active site" description="Nucleophile" evidence="1">
    <location>
        <position position="105"/>
    </location>
</feature>
<feature type="active site" evidence="1">
    <location>
        <position position="130"/>
    </location>
</feature>
<evidence type="ECO:0000255" key="1">
    <source>
        <dbReference type="HAMAP-Rule" id="MF_00444"/>
    </source>
</evidence>
<accession>Q4URL4</accession>
<comment type="function">
    <text evidence="1">Cleaves peptides in various proteins in a process that requires ATP hydrolysis. Has a chymotrypsin-like activity. Plays a major role in the degradation of misfolded proteins.</text>
</comment>
<comment type="catalytic activity">
    <reaction evidence="1">
        <text>Hydrolysis of proteins to small peptides in the presence of ATP and magnesium. alpha-casein is the usual test substrate. In the absence of ATP, only oligopeptides shorter than five residues are hydrolyzed (such as succinyl-Leu-Tyr-|-NHMec, and Leu-Tyr-Leu-|-Tyr-Trp, in which cleavage of the -Tyr-|-Leu- and -Tyr-|-Trp bonds also occurs).</text>
        <dbReference type="EC" id="3.4.21.92"/>
    </reaction>
</comment>
<comment type="subunit">
    <text evidence="1">Fourteen ClpP subunits assemble into 2 heptameric rings which stack back to back to give a disk-like structure with a central cavity, resembling the structure of eukaryotic proteasomes.</text>
</comment>
<comment type="subcellular location">
    <subcellularLocation>
        <location evidence="1">Cytoplasm</location>
    </subcellularLocation>
</comment>
<comment type="similarity">
    <text evidence="1">Belongs to the peptidase S14 family.</text>
</comment>
<reference key="1">
    <citation type="journal article" date="2005" name="Genome Res.">
        <title>Comparative and functional genomic analyses of the pathogenicity of phytopathogen Xanthomonas campestris pv. campestris.</title>
        <authorList>
            <person name="Qian W."/>
            <person name="Jia Y."/>
            <person name="Ren S.-X."/>
            <person name="He Y.-Q."/>
            <person name="Feng J.-X."/>
            <person name="Lu L.-F."/>
            <person name="Sun Q."/>
            <person name="Ying G."/>
            <person name="Tang D.-J."/>
            <person name="Tang H."/>
            <person name="Wu W."/>
            <person name="Hao P."/>
            <person name="Wang L."/>
            <person name="Jiang B.-L."/>
            <person name="Zeng S."/>
            <person name="Gu W.-Y."/>
            <person name="Lu G."/>
            <person name="Rong L."/>
            <person name="Tian Y."/>
            <person name="Yao Z."/>
            <person name="Fu G."/>
            <person name="Chen B."/>
            <person name="Fang R."/>
            <person name="Qiang B."/>
            <person name="Chen Z."/>
            <person name="Zhao G.-P."/>
            <person name="Tang J.-L."/>
            <person name="He C."/>
        </authorList>
    </citation>
    <scope>NUCLEOTIDE SEQUENCE [LARGE SCALE GENOMIC DNA]</scope>
    <source>
        <strain>8004</strain>
    </source>
</reference>
<proteinExistence type="inferred from homology"/>